<name>SAR1_HYPJE</name>
<organism>
    <name type="scientific">Hypocrea jecorina</name>
    <name type="common">Trichoderma reesei</name>
    <dbReference type="NCBI Taxonomy" id="51453"/>
    <lineage>
        <taxon>Eukaryota</taxon>
        <taxon>Fungi</taxon>
        <taxon>Dikarya</taxon>
        <taxon>Ascomycota</taxon>
        <taxon>Pezizomycotina</taxon>
        <taxon>Sordariomycetes</taxon>
        <taxon>Hypocreomycetidae</taxon>
        <taxon>Hypocreales</taxon>
        <taxon>Hypocreaceae</taxon>
        <taxon>Trichoderma</taxon>
    </lineage>
</organism>
<comment type="function">
    <text evidence="1">Small GTPase component of the coat protein complex II (COPII) which promotes the formation of transport vesicles from the endoplasmic reticulum (ER). The coat has two main functions, the physical deformation of the endoplasmic reticulum membrane into vesicles and the selection of cargo molecules. Sar1 controls the coat assembly in a stepwise manner. Activated sar1-GTP binds to membranes first and recruits the sec23/24 complex. These sec23/24-SAR1 prebudding intermediates are then collected by the sec13/31 complex as subunits polymerize to form coated transport vesicles. Conversion to sar1-GDP triggers coat release and recycles COPII subunits (By similarity).</text>
</comment>
<comment type="catalytic activity">
    <reaction>
        <text>GTP + H2O = GDP + phosphate + H(+)</text>
        <dbReference type="Rhea" id="RHEA:19669"/>
        <dbReference type="ChEBI" id="CHEBI:15377"/>
        <dbReference type="ChEBI" id="CHEBI:15378"/>
        <dbReference type="ChEBI" id="CHEBI:37565"/>
        <dbReference type="ChEBI" id="CHEBI:43474"/>
        <dbReference type="ChEBI" id="CHEBI:58189"/>
    </reaction>
</comment>
<comment type="subunit">
    <text evidence="1">COPII is composed of at least 5 proteins: the sec23/24 complex, the sec13/31 complex and sar1.</text>
</comment>
<comment type="subcellular location">
    <subcellularLocation>
        <location evidence="1">Cytoplasmic vesicle</location>
        <location evidence="1">COPII-coated vesicle membrane</location>
        <topology evidence="1">Peripheral membrane protein</topology>
        <orientation evidence="1">Cytoplasmic side</orientation>
    </subcellularLocation>
    <subcellularLocation>
        <location evidence="1">Endoplasmic reticulum membrane</location>
        <topology evidence="1">Peripheral membrane protein</topology>
        <orientation evidence="1">Cytoplasmic side</orientation>
    </subcellularLocation>
    <subcellularLocation>
        <location evidence="1">Golgi apparatus membrane</location>
        <topology evidence="1">Peripheral membrane protein</topology>
        <orientation evidence="1">Cytoplasmic side</orientation>
    </subcellularLocation>
</comment>
<comment type="similarity">
    <text evidence="2">Belongs to the small GTPase superfamily. SAR1 family.</text>
</comment>
<protein>
    <recommendedName>
        <fullName>Small COPII coat GTPase sar1</fullName>
        <ecNumber>3.6.5.-</ecNumber>
    </recommendedName>
</protein>
<feature type="chain" id="PRO_0000206274" description="Small COPII coat GTPase sar1">
    <location>
        <begin position="1"/>
        <end position="189"/>
    </location>
</feature>
<feature type="binding site" evidence="1">
    <location>
        <begin position="27"/>
        <end position="34"/>
    </location>
    <ligand>
        <name>GTP</name>
        <dbReference type="ChEBI" id="CHEBI:37565"/>
    </ligand>
</feature>
<feature type="binding site" evidence="1">
    <location>
        <begin position="70"/>
        <end position="73"/>
    </location>
    <ligand>
        <name>GTP</name>
        <dbReference type="ChEBI" id="CHEBI:37565"/>
    </ligand>
</feature>
<feature type="binding site" evidence="1">
    <location>
        <begin position="129"/>
        <end position="132"/>
    </location>
    <ligand>
        <name>GTP</name>
        <dbReference type="ChEBI" id="CHEBI:37565"/>
    </ligand>
</feature>
<proteinExistence type="inferred from homology"/>
<keyword id="KW-0968">Cytoplasmic vesicle</keyword>
<keyword id="KW-0256">Endoplasmic reticulum</keyword>
<keyword id="KW-0931">ER-Golgi transport</keyword>
<keyword id="KW-0333">Golgi apparatus</keyword>
<keyword id="KW-0342">GTP-binding</keyword>
<keyword id="KW-0378">Hydrolase</keyword>
<keyword id="KW-0472">Membrane</keyword>
<keyword id="KW-0547">Nucleotide-binding</keyword>
<keyword id="KW-0653">Protein transport</keyword>
<keyword id="KW-0813">Transport</keyword>
<gene>
    <name type="primary">sar1</name>
</gene>
<dbReference type="EC" id="3.6.5.-"/>
<dbReference type="EMBL" id="Y08636">
    <property type="protein sequence ID" value="CAA69926.1"/>
    <property type="molecule type" value="Genomic_DNA"/>
</dbReference>
<dbReference type="SMR" id="P78976"/>
<dbReference type="VEuPathDB" id="FungiDB:TrQ_008754"/>
<dbReference type="OMA" id="GLWNKHG"/>
<dbReference type="GO" id="GO:0030127">
    <property type="term" value="C:COPII vesicle coat"/>
    <property type="evidence" value="ECO:0007669"/>
    <property type="project" value="EnsemblFungi"/>
</dbReference>
<dbReference type="GO" id="GO:0070971">
    <property type="term" value="C:endoplasmic reticulum exit site"/>
    <property type="evidence" value="ECO:0007669"/>
    <property type="project" value="EnsemblFungi"/>
</dbReference>
<dbReference type="GO" id="GO:0005789">
    <property type="term" value="C:endoplasmic reticulum membrane"/>
    <property type="evidence" value="ECO:0007669"/>
    <property type="project" value="UniProtKB-SubCell"/>
</dbReference>
<dbReference type="GO" id="GO:0000139">
    <property type="term" value="C:Golgi membrane"/>
    <property type="evidence" value="ECO:0007669"/>
    <property type="project" value="UniProtKB-SubCell"/>
</dbReference>
<dbReference type="GO" id="GO:0044233">
    <property type="term" value="C:mitochondria-associated endoplasmic reticulum membrane contact site"/>
    <property type="evidence" value="ECO:0007669"/>
    <property type="project" value="EnsemblFungi"/>
</dbReference>
<dbReference type="GO" id="GO:0005739">
    <property type="term" value="C:mitochondrion"/>
    <property type="evidence" value="ECO:0007669"/>
    <property type="project" value="GOC"/>
</dbReference>
<dbReference type="GO" id="GO:0005525">
    <property type="term" value="F:GTP binding"/>
    <property type="evidence" value="ECO:0007669"/>
    <property type="project" value="UniProtKB-KW"/>
</dbReference>
<dbReference type="GO" id="GO:0003924">
    <property type="term" value="F:GTPase activity"/>
    <property type="evidence" value="ECO:0007669"/>
    <property type="project" value="EnsemblFungi"/>
</dbReference>
<dbReference type="GO" id="GO:0090158">
    <property type="term" value="P:endoplasmic reticulum membrane organization"/>
    <property type="evidence" value="ECO:0007669"/>
    <property type="project" value="EnsemblFungi"/>
</dbReference>
<dbReference type="GO" id="GO:0006888">
    <property type="term" value="P:endoplasmic reticulum to Golgi vesicle-mediated transport"/>
    <property type="evidence" value="ECO:0007669"/>
    <property type="project" value="EnsemblFungi"/>
</dbReference>
<dbReference type="GO" id="GO:0006886">
    <property type="term" value="P:intracellular protein transport"/>
    <property type="evidence" value="ECO:0007669"/>
    <property type="project" value="InterPro"/>
</dbReference>
<dbReference type="GO" id="GO:0000266">
    <property type="term" value="P:mitochondrial fission"/>
    <property type="evidence" value="ECO:0007669"/>
    <property type="project" value="EnsemblFungi"/>
</dbReference>
<dbReference type="GO" id="GO:0007006">
    <property type="term" value="P:mitochondrial membrane organization"/>
    <property type="evidence" value="ECO:0007669"/>
    <property type="project" value="EnsemblFungi"/>
</dbReference>
<dbReference type="GO" id="GO:0006998">
    <property type="term" value="P:nuclear envelope organization"/>
    <property type="evidence" value="ECO:0007669"/>
    <property type="project" value="EnsemblFungi"/>
</dbReference>
<dbReference type="GO" id="GO:1902953">
    <property type="term" value="P:positive regulation of ER to Golgi vesicle-mediated transport"/>
    <property type="evidence" value="ECO:0007669"/>
    <property type="project" value="EnsemblFungi"/>
</dbReference>
<dbReference type="GO" id="GO:0070863">
    <property type="term" value="P:positive regulation of protein exit from endoplasmic reticulum"/>
    <property type="evidence" value="ECO:0007669"/>
    <property type="project" value="EnsemblFungi"/>
</dbReference>
<dbReference type="GO" id="GO:0003400">
    <property type="term" value="P:regulation of COPII vesicle coating"/>
    <property type="evidence" value="ECO:0007669"/>
    <property type="project" value="EnsemblFungi"/>
</dbReference>
<dbReference type="GO" id="GO:0016050">
    <property type="term" value="P:vesicle organization"/>
    <property type="evidence" value="ECO:0007669"/>
    <property type="project" value="EnsemblFungi"/>
</dbReference>
<dbReference type="CDD" id="cd00879">
    <property type="entry name" value="Sar1"/>
    <property type="match status" value="1"/>
</dbReference>
<dbReference type="FunFam" id="3.40.50.300:FF:000161">
    <property type="entry name" value="Small COPII coat GTPase"/>
    <property type="match status" value="1"/>
</dbReference>
<dbReference type="Gene3D" id="3.40.50.300">
    <property type="entry name" value="P-loop containing nucleotide triphosphate hydrolases"/>
    <property type="match status" value="1"/>
</dbReference>
<dbReference type="InterPro" id="IPR027417">
    <property type="entry name" value="P-loop_NTPase"/>
</dbReference>
<dbReference type="InterPro" id="IPR005225">
    <property type="entry name" value="Small_GTP-bd"/>
</dbReference>
<dbReference type="InterPro" id="IPR006689">
    <property type="entry name" value="Small_GTPase_ARF/SAR"/>
</dbReference>
<dbReference type="InterPro" id="IPR006687">
    <property type="entry name" value="Small_GTPase_SAR1"/>
</dbReference>
<dbReference type="NCBIfam" id="TIGR00231">
    <property type="entry name" value="small_GTP"/>
    <property type="match status" value="1"/>
</dbReference>
<dbReference type="PANTHER" id="PTHR45684">
    <property type="entry name" value="RE74312P"/>
    <property type="match status" value="1"/>
</dbReference>
<dbReference type="Pfam" id="PF00025">
    <property type="entry name" value="Arf"/>
    <property type="match status" value="1"/>
</dbReference>
<dbReference type="PRINTS" id="PR00328">
    <property type="entry name" value="SAR1GTPBP"/>
</dbReference>
<dbReference type="SMART" id="SM00177">
    <property type="entry name" value="ARF"/>
    <property type="match status" value="1"/>
</dbReference>
<dbReference type="SMART" id="SM00178">
    <property type="entry name" value="SAR"/>
    <property type="match status" value="1"/>
</dbReference>
<dbReference type="SUPFAM" id="SSF52540">
    <property type="entry name" value="P-loop containing nucleoside triphosphate hydrolases"/>
    <property type="match status" value="1"/>
</dbReference>
<dbReference type="PROSITE" id="PS51422">
    <property type="entry name" value="SAR1"/>
    <property type="match status" value="1"/>
</dbReference>
<sequence length="189" mass="21546">MWIVNWFYDVLSSLGLLNKHAKLLFLGLDNAGKTTLLHMLKNDRVAILQPTLHPTSEELAIGNVRFNTFDLGGHQQARRIWRDYFPDVNGVVFLVDAKDHERFPEAKAELDALLSMEELSKVPFVILGNKIDHPDAVSEDELRHQLGLYQTTGKGRVQLEGIRPIELFMCSVVMRQGYGDGIRWLSNYV</sequence>
<reference key="1">
    <citation type="journal article" date="1997" name="Mol. Gen. Genet.">
        <title>Isolation and analysis of functional homologues of the secretion-related SAR1 gene of Saccharomyces cerevisiae from Aspergillus niger and Trichoderma reesei.</title>
        <authorList>
            <person name="Veldhuisen G."/>
            <person name="Saloheimo M."/>
            <person name="Fiers M.A."/>
            <person name="Punt P.J."/>
            <person name="Contreras R."/>
            <person name="Penttilae M."/>
            <person name="van den Hondel C.A."/>
        </authorList>
    </citation>
    <scope>NUCLEOTIDE SEQUENCE [GENOMIC DNA]</scope>
    <source>
        <strain>ATCC 56765 / Rut C-30</strain>
    </source>
</reference>
<evidence type="ECO:0000250" key="1"/>
<evidence type="ECO:0000305" key="2"/>
<accession>P78976</accession>